<dbReference type="EC" id="2.3.1.255" evidence="2 4 5"/>
<dbReference type="EC" id="2.3.1.258" evidence="2 4"/>
<dbReference type="EMBL" id="AE006641">
    <property type="protein sequence ID" value="AAK40554.1"/>
    <property type="status" value="ALT_INIT"/>
    <property type="molecule type" value="Genomic_DNA"/>
</dbReference>
<dbReference type="PIR" id="C90162">
    <property type="entry name" value="C90162"/>
</dbReference>
<dbReference type="PDB" id="2X7B">
    <property type="method" value="X-ray"/>
    <property type="resolution" value="1.95 A"/>
    <property type="chains" value="A=1-167"/>
</dbReference>
<dbReference type="PDB" id="4LX9">
    <property type="method" value="X-ray"/>
    <property type="resolution" value="1.98 A"/>
    <property type="chains" value="A=1-167"/>
</dbReference>
<dbReference type="PDB" id="4R3K">
    <property type="method" value="X-ray"/>
    <property type="resolution" value="2.13 A"/>
    <property type="chains" value="A=1-167"/>
</dbReference>
<dbReference type="PDB" id="4R3L">
    <property type="method" value="X-ray"/>
    <property type="resolution" value="1.84 A"/>
    <property type="chains" value="A=1-167"/>
</dbReference>
<dbReference type="PDB" id="5C88">
    <property type="method" value="X-ray"/>
    <property type="resolution" value="2.49 A"/>
    <property type="chains" value="A/B=1-167"/>
</dbReference>
<dbReference type="PDB" id="6AG4">
    <property type="method" value="X-ray"/>
    <property type="resolution" value="2.26 A"/>
    <property type="chains" value="A=1-167"/>
</dbReference>
<dbReference type="PDB" id="6AG5">
    <property type="method" value="X-ray"/>
    <property type="resolution" value="2.32 A"/>
    <property type="chains" value="A=1-167"/>
</dbReference>
<dbReference type="PDBsum" id="2X7B"/>
<dbReference type="PDBsum" id="4LX9"/>
<dbReference type="PDBsum" id="4R3K"/>
<dbReference type="PDBsum" id="4R3L"/>
<dbReference type="PDBsum" id="5C88"/>
<dbReference type="PDBsum" id="6AG4"/>
<dbReference type="PDBsum" id="6AG5"/>
<dbReference type="SMR" id="Q980R9"/>
<dbReference type="FunCoup" id="Q980R9">
    <property type="interactions" value="117"/>
</dbReference>
<dbReference type="STRING" id="273057.SSO0209"/>
<dbReference type="PaxDb" id="273057-SSO0209"/>
<dbReference type="DNASU" id="1455364"/>
<dbReference type="EnsemblBacteria" id="AAK40554">
    <property type="protein sequence ID" value="AAK40554"/>
    <property type="gene ID" value="SSO0209"/>
</dbReference>
<dbReference type="KEGG" id="sso:SSO0209"/>
<dbReference type="PATRIC" id="fig|273057.12.peg.208"/>
<dbReference type="eggNOG" id="arCOG00833">
    <property type="taxonomic scope" value="Archaea"/>
</dbReference>
<dbReference type="HOGENOM" id="CLU_013985_23_0_2"/>
<dbReference type="InParanoid" id="Q980R9"/>
<dbReference type="PhylomeDB" id="Q980R9"/>
<dbReference type="BRENDA" id="2.3.1.255">
    <property type="organism ID" value="6163"/>
</dbReference>
<dbReference type="EvolutionaryTrace" id="Q980R9"/>
<dbReference type="Proteomes" id="UP000001974">
    <property type="component" value="Chromosome"/>
</dbReference>
<dbReference type="GO" id="GO:0031415">
    <property type="term" value="C:NatA complex"/>
    <property type="evidence" value="ECO:0007669"/>
    <property type="project" value="InterPro"/>
</dbReference>
<dbReference type="GO" id="GO:0046872">
    <property type="term" value="F:metal ion binding"/>
    <property type="evidence" value="ECO:0007669"/>
    <property type="project" value="UniProtKB-KW"/>
</dbReference>
<dbReference type="GO" id="GO:0120518">
    <property type="term" value="F:protein N-terminal-methionine acetyltransferase activity"/>
    <property type="evidence" value="ECO:0007669"/>
    <property type="project" value="UniProtKB-EC"/>
</dbReference>
<dbReference type="GO" id="GO:1990189">
    <property type="term" value="F:protein N-terminal-serine acetyltransferase activity"/>
    <property type="evidence" value="ECO:0007669"/>
    <property type="project" value="RHEA"/>
</dbReference>
<dbReference type="GO" id="GO:0004596">
    <property type="term" value="F:protein-N-terminal amino-acid acetyltransferase activity"/>
    <property type="evidence" value="ECO:0000314"/>
    <property type="project" value="UniProtKB"/>
</dbReference>
<dbReference type="GO" id="GO:0008999">
    <property type="term" value="F:protein-N-terminal-alanine acetyltransferase activity"/>
    <property type="evidence" value="ECO:0007669"/>
    <property type="project" value="RHEA"/>
</dbReference>
<dbReference type="CDD" id="cd04301">
    <property type="entry name" value="NAT_SF"/>
    <property type="match status" value="1"/>
</dbReference>
<dbReference type="FunFam" id="3.40.630.30:FF:000200">
    <property type="entry name" value="N-alpha-acetyltransferase"/>
    <property type="match status" value="1"/>
</dbReference>
<dbReference type="Gene3D" id="3.40.630.30">
    <property type="match status" value="1"/>
</dbReference>
<dbReference type="InterPro" id="IPR006464">
    <property type="entry name" value="AcTrfase_RimI/Ard1"/>
</dbReference>
<dbReference type="InterPro" id="IPR016181">
    <property type="entry name" value="Acyl_CoA_acyltransferase"/>
</dbReference>
<dbReference type="InterPro" id="IPR045047">
    <property type="entry name" value="Ard1-like"/>
</dbReference>
<dbReference type="InterPro" id="IPR000182">
    <property type="entry name" value="GNAT_dom"/>
</dbReference>
<dbReference type="NCBIfam" id="TIGR01575">
    <property type="entry name" value="rimI"/>
    <property type="match status" value="1"/>
</dbReference>
<dbReference type="PANTHER" id="PTHR23091">
    <property type="entry name" value="N-TERMINAL ACETYLTRANSFERASE"/>
    <property type="match status" value="1"/>
</dbReference>
<dbReference type="PANTHER" id="PTHR23091:SF4">
    <property type="entry name" value="N-TERMINAL AMINO-ACID N(ALPHA)-ACETYLTRANSFERASE NATA"/>
    <property type="match status" value="1"/>
</dbReference>
<dbReference type="Pfam" id="PF00583">
    <property type="entry name" value="Acetyltransf_1"/>
    <property type="match status" value="1"/>
</dbReference>
<dbReference type="SUPFAM" id="SSF55729">
    <property type="entry name" value="Acyl-CoA N-acyltransferases (Nat)"/>
    <property type="match status" value="1"/>
</dbReference>
<dbReference type="PROSITE" id="PS51186">
    <property type="entry name" value="GNAT"/>
    <property type="match status" value="1"/>
</dbReference>
<gene>
    <name evidence="7" type="primary">ard1</name>
    <name type="ordered locus">SSO0209</name>
</gene>
<comment type="function">
    <text evidence="2 4 5">Displays alpha (N-terminal) acetyltransferase activity. Catalyzes the covalent attachment of an acetyl moiety from acetyl-CoA to the free alpha-amino group at the N-terminus of a protein (PubMed:17511810, PubMed:23959863, PubMed:25728374). NAT is able to acetylate the alpha-amino group of methionine, alanine and serine N-terminal residue substrates, however it has a preference for Ser-N-terminal substrates (PubMed:17511810, PubMed:23959863, PubMed:25728374).</text>
</comment>
<comment type="catalytic activity">
    <reaction evidence="2 5">
        <text>N-terminal L-alanyl-[protein] + acetyl-CoA = N-terminal N(alpha)-acetyl-L-alanyl-[protein] + CoA + H(+)</text>
        <dbReference type="Rhea" id="RHEA:50500"/>
        <dbReference type="Rhea" id="RHEA-COMP:12701"/>
        <dbReference type="Rhea" id="RHEA-COMP:12702"/>
        <dbReference type="ChEBI" id="CHEBI:15378"/>
        <dbReference type="ChEBI" id="CHEBI:57287"/>
        <dbReference type="ChEBI" id="CHEBI:57288"/>
        <dbReference type="ChEBI" id="CHEBI:64718"/>
        <dbReference type="ChEBI" id="CHEBI:83683"/>
        <dbReference type="EC" id="2.3.1.255"/>
    </reaction>
</comment>
<comment type="catalytic activity">
    <reaction evidence="2 4 5">
        <text>N-terminal L-seryl-[protein] + acetyl-CoA = N-terminal N(alpha)-acetyl-L-seryl-[protein] + CoA + H(+)</text>
        <dbReference type="Rhea" id="RHEA:50504"/>
        <dbReference type="Rhea" id="RHEA-COMP:12703"/>
        <dbReference type="Rhea" id="RHEA-COMP:12704"/>
        <dbReference type="ChEBI" id="CHEBI:15378"/>
        <dbReference type="ChEBI" id="CHEBI:57287"/>
        <dbReference type="ChEBI" id="CHEBI:57288"/>
        <dbReference type="ChEBI" id="CHEBI:64738"/>
        <dbReference type="ChEBI" id="CHEBI:83690"/>
        <dbReference type="EC" id="2.3.1.255"/>
    </reaction>
</comment>
<comment type="catalytic activity">
    <reaction evidence="2 4">
        <text>N-terminal L-methionyl-L-leucyl-[protein] + acetyl-CoA = N-terminal N(alpha)-acetyl-L-methionyl-L-leucyl-[protein] + CoA + H(+)</text>
        <dbReference type="Rhea" id="RHEA:50520"/>
        <dbReference type="Rhea" id="RHEA-COMP:12711"/>
        <dbReference type="Rhea" id="RHEA-COMP:12712"/>
        <dbReference type="ChEBI" id="CHEBI:15378"/>
        <dbReference type="ChEBI" id="CHEBI:57287"/>
        <dbReference type="ChEBI" id="CHEBI:57288"/>
        <dbReference type="ChEBI" id="CHEBI:133377"/>
        <dbReference type="ChEBI" id="CHEBI:133378"/>
        <dbReference type="EC" id="2.3.1.258"/>
    </reaction>
</comment>
<comment type="catalytic activity">
    <reaction evidence="2">
        <text>N-terminal L-methionyl-L-glutamyl-[protein] + acetyl-CoA = N-terminal N(alpha)-acetyl-L-methionyl-L-glutamyl-[protein] + CoA + H(+)</text>
        <dbReference type="Rhea" id="RHEA:50488"/>
        <dbReference type="Rhea" id="RHEA-COMP:12696"/>
        <dbReference type="Rhea" id="RHEA-COMP:12697"/>
        <dbReference type="ChEBI" id="CHEBI:15378"/>
        <dbReference type="ChEBI" id="CHEBI:57287"/>
        <dbReference type="ChEBI" id="CHEBI:57288"/>
        <dbReference type="ChEBI" id="CHEBI:133359"/>
        <dbReference type="ChEBI" id="CHEBI:133360"/>
    </reaction>
</comment>
<comment type="biophysicochemical properties">
    <kinetics>
        <KM evidence="4">54 uM for Ser-N-terminal peptide</KM>
        <KM evidence="5">67.17 uM for acetyl-CoA (at 65 degrees Celsius with Ser-N-terminal peptide (Alba))</KM>
        <KM evidence="4">400 uM for Met-N-terminal peptide</KM>
        <text evidence="4 5">kcat is 33.57 min(-1) for acetyltransferase activity with acetyl-CoA (at 65 degrees Celsius with Ser-N-terminal peptide (Alba)) (PubMed:25728374). kcat is 3.3 min(-1) for acetyltransferase activity with Ser-N-terminal peptide (PubMed:23959863). kcat is 0.73 min(-1) for acetyltransferase activity with Met-N-terminal peptide (PubMed:23959863).</text>
    </kinetics>
    <temperatureDependence>
        <text evidence="6">Thermostable.</text>
    </temperatureDependence>
</comment>
<comment type="subunit">
    <text evidence="9">Homodimer.</text>
</comment>
<comment type="subcellular location">
    <subcellularLocation>
        <location evidence="8">Cytoplasm</location>
    </subcellularLocation>
</comment>
<comment type="miscellaneous">
    <text evidence="2 4">NAT does not require a binding partner for activity.</text>
</comment>
<comment type="similarity">
    <text evidence="8">Belongs to the acetyltransferase family. ARD1 subfamily.</text>
</comment>
<comment type="sequence caution" evidence="8">
    <conflict type="erroneous initiation">
        <sequence resource="EMBL-CDS" id="AAK40554"/>
    </conflict>
    <text>Extended N-terminus.</text>
</comment>
<name>NAT_SACS2</name>
<feature type="chain" id="PRO_0000281644" description="N-alpha-acetyltransferase">
    <location>
        <begin position="1"/>
        <end position="167"/>
    </location>
</feature>
<feature type="domain" description="N-acetyltransferase" evidence="1">
    <location>
        <begin position="12"/>
        <end position="167"/>
    </location>
</feature>
<feature type="binding site" evidence="5 13">
    <location>
        <position position="37"/>
    </location>
    <ligand>
        <name>substrate</name>
    </ligand>
</feature>
<feature type="binding site" evidence="4 11">
    <location>
        <position position="88"/>
    </location>
    <ligand>
        <name>Zn(2+)</name>
        <dbReference type="ChEBI" id="CHEBI:29105"/>
    </ligand>
</feature>
<feature type="binding site" evidence="3 4 5 6 10 11 12 13 14">
    <location>
        <begin position="92"/>
        <end position="94"/>
    </location>
    <ligand>
        <name>acetyl-CoA</name>
        <dbReference type="ChEBI" id="CHEBI:57288"/>
    </ligand>
</feature>
<feature type="binding site" evidence="3 4 5 6 10 11 12 13 14">
    <location>
        <begin position="100"/>
        <end position="105"/>
    </location>
    <ligand>
        <name>acetyl-CoA</name>
        <dbReference type="ChEBI" id="CHEBI:57288"/>
    </ligand>
</feature>
<feature type="binding site" evidence="4 11">
    <location>
        <position position="127"/>
    </location>
    <ligand>
        <name>Zn(2+)</name>
        <dbReference type="ChEBI" id="CHEBI:29105"/>
    </ligand>
</feature>
<feature type="binding site" evidence="3 4 5 10 11 12 13">
    <location>
        <position position="132"/>
    </location>
    <ligand>
        <name>acetyl-CoA</name>
        <dbReference type="ChEBI" id="CHEBI:57288"/>
    </ligand>
</feature>
<feature type="binding site" evidence="3 4 5 10 11 12 13">
    <location>
        <begin position="139"/>
        <end position="141"/>
    </location>
    <ligand>
        <name>acetyl-CoA</name>
        <dbReference type="ChEBI" id="CHEBI:57288"/>
    </ligand>
</feature>
<feature type="binding site" evidence="5 13">
    <location>
        <position position="154"/>
    </location>
    <ligand>
        <name>substrate</name>
    </ligand>
</feature>
<feature type="site" description="Plays an important role in substrate specificity" evidence="5">
    <location>
        <position position="35"/>
    </location>
</feature>
<feature type="site" description="Plays an important role in modulating multiple conformations of loop regions and contributes to protein thermostability" evidence="6">
    <location>
        <position position="75"/>
    </location>
</feature>
<feature type="site" description="Plays an important role in modulating multiple conformations of loop regions and contributes to protein thermostability" evidence="6">
    <location>
        <position position="82"/>
    </location>
</feature>
<feature type="mutagenesis site" description="20- and 2-fold decrease of the catalytic efficiency and affinity for Ser-N-terminal peptide. 11-fold decrease of the catalytic efficiency for Met-N-terminal peptide, but almost same affinity compared to the wild-type." evidence="4">
    <original>L</original>
    <variation>A</variation>
    <location>
        <position position="33"/>
    </location>
</feature>
<feature type="mutagenesis site" description="20-fold decrease of the catalytic efficiency for Ser-N-terminal peptide, but almost same affinity compared to the wild-type. 18-fold decrease of the catalytic efficiency for Met-N-terminal peptide, but almost same affinity compared to the wild-type." evidence="4 5">
    <original>P</original>
    <variation>A</variation>
    <location>
        <position position="34"/>
    </location>
</feature>
<feature type="mutagenesis site" description="Slight increase of the catalytic efficiency for Ser-N-terminal peptide, but 4-fold decrease of the affinity compared to the wild-type. 6-fold increase of the catalytic efficiency for Met-N-terminal peptide and slight decrease of the affinity compared to the wild-type." evidence="4 5">
    <original>E</original>
    <variation>A</variation>
    <location>
        <position position="35"/>
    </location>
</feature>
<feature type="mutagenesis site" description="Strong decrease of the acetyltransferase activity with Ser-N-terminal peptide such as Alba. 2-fold increase of acetyltransferase activity for Ala-N-terminal peptide such as Hjc compared to the wild-type." evidence="5">
    <original>E</original>
    <variation>F</variation>
    <location>
        <position position="35"/>
    </location>
</feature>
<feature type="mutagenesis site" description="Loss of acetyltransferase activity for Ser and Met-N-terminal peptide; when associated with Gln-127." evidence="4">
    <original>E</original>
    <variation>Q</variation>
    <location>
        <position position="35"/>
    </location>
</feature>
<feature type="mutagenesis site" description="Alters the N-terminal substrate specificity and allows large N-terminal end residue of the substrate to be accommodated in a substrate-binding pocket. 4-fold increase of the acetyltransferase activity with Met-N-terminal peptide such as SSB compared to the wild-type. 2-fold increase of acetyltransferase activity with Ala-N-terminal peptide such as Hjc." evidence="5">
    <original>E</original>
    <variation>V</variation>
    <location>
        <position position="35"/>
    </location>
</feature>
<feature type="mutagenesis site" description="Low acetyltransferase activity with Ala-, Met- and Ser-N-terminal peptide." evidence="5">
    <original>E</original>
    <variation>W</variation>
    <location>
        <position position="35"/>
    </location>
</feature>
<feature type="mutagenesis site" description="34-fold decrease of the catalytic efficiency for Ser-N-terminal peptide and slight decrease of the affinity compared to the wild-type. Loss of acetyltransferase activity for Met-N-terminal peptide." evidence="4">
    <original>Y</original>
    <variation>A</variation>
    <location>
        <position position="37"/>
    </location>
</feature>
<feature type="mutagenesis site" description="Same catalytic efficiency and slight decrease of the affinity for Ser-N-terminal peptide compared to the wild-type. 3-fold decrease of the catalytic efficiency and 1.3-fold increase of the affinity for Met-N-terminal peptide compared to the wild-type." evidence="4">
    <original>Y</original>
    <variation>F</variation>
    <location>
        <position position="37"/>
    </location>
</feature>
<feature type="mutagenesis site" description="Has a melting temperature about 3 degrees Celsius lower than that of the wild-type." evidence="6">
    <original>S</original>
    <variation>A</variation>
    <location>
        <position position="75"/>
    </location>
</feature>
<feature type="mutagenesis site" description="Has a melting temperature about 3 degrees Celsius lower than that of the wild-type." evidence="6">
    <original>S</original>
    <variation>A</variation>
    <location>
        <position position="82"/>
    </location>
</feature>
<feature type="mutagenesis site" description="2.5- and 1.5-fold decrease of the catalytic efficiency and affinity for Ser-N-terminal peptide compared to the wild-type, respectively. Loss of acetyltransferase activity for Met-N-terminal peptide." evidence="4">
    <original>H</original>
    <variation>A</variation>
    <location>
        <position position="88"/>
    </location>
</feature>
<feature type="mutagenesis site" description="2.5-fold decrease of the catalytic efficiency for Ser-N-terminal peptide, but almost same affinity compared to the wild-type. Loss of acetyltransferase activity for Met-N-terminal peptide." evidence="4">
    <original>H</original>
    <variation>F</variation>
    <location>
        <position position="88"/>
    </location>
</feature>
<feature type="mutagenesis site" description="2.5-fold decrease of the catalytic efficiency for Ser-N-terminal peptide, but 1.5-fold increase of the affinity compared to the wild-type. Loss of acetyltransferase activity for Met-N-terminal peptide." evidence="4">
    <original>H</original>
    <variation>Q</variation>
    <location>
        <position position="88"/>
    </location>
</feature>
<feature type="mutagenesis site" description="7-fold decrease of the affinity, with no significant difference in the catalytic efficiency. Same fold compared to the wild-type." evidence="5">
    <original>R</original>
    <variation>A</variation>
    <location>
        <position position="100"/>
    </location>
</feature>
<feature type="mutagenesis site" description="3-fold decrease of the affinity, with no significant difference in the catalytic efficiency. Same fold compared to the wild-type." evidence="5">
    <original>T</original>
    <variation>A</variation>
    <location>
        <position position="105"/>
    </location>
</feature>
<feature type="mutagenesis site" description="Same catalytic efficiency and 1.7-fold decrease of the affinity for Ser-N-terminal peptide compared to the wild-type. 1.5- and 2.5-fold decrease of the catalytic efficiency and affinity for Met-N-terminal peptide compared to the wild-type, respectively." evidence="4">
    <original>Y</original>
    <variation>A</variation>
    <location>
        <position position="125"/>
    </location>
</feature>
<feature type="mutagenesis site" description="Same catalytic efficiency and slight decrease of the affinity for Ser-N-terminal peptide compared to the wild-type. Loss of acetyltransferase activity for Met-N-terminal peptide." evidence="4">
    <original>E</original>
    <variation>A</variation>
    <location>
        <position position="127"/>
    </location>
</feature>
<feature type="mutagenesis site" description="1.3-fold decrease of the catalytic efficiency for Ser-N-terminal peptide, but almost same affinity compared to the wild-type. 1.7-fold decrease of the catalytic efficiency and 1.3-fold increase of the affinity for Met-N-terminal peptide compared to the wild-type." evidence="4">
    <original>E</original>
    <variation>H</variation>
    <location>
        <position position="127"/>
    </location>
</feature>
<feature type="mutagenesis site" description="2.3-fold decrease of the catalytic efficiency and 1.3-fold increase of the affinity for Ser-N-terminal peptide compared to the wild-type. 5-fold decrease of the catalytic efficiency and slight decrease of the affinity for Met-N-terminal peptide compared to the wild-type. Loss of acetyltransferase activity for Ser and Met-N-terminal peptide; when associated with Gln-35." evidence="4">
    <original>E</original>
    <variation>Q</variation>
    <location>
        <position position="127"/>
    </location>
</feature>
<feature type="mutagenesis site" description="Slight decrease of the catalytic efficiency and of the affinity for Ser-N-terminal peptide compared to teh wild-type. 2.5-fold increase of the catalytic efficiency and almost the same affinity for Met-N-terminal peptide compared to the wild-type." evidence="4">
    <original>R</original>
    <variation>A</variation>
    <location>
        <position position="129"/>
    </location>
</feature>
<feature type="mutagenesis site" description="4.5-fold decrease of the affinity, with no significant difference in the catalytic efficiency. Same fold compared to the wild-type." evidence="5">
    <original>N</original>
    <variation>A</variation>
    <location>
        <position position="132"/>
    </location>
</feature>
<feature type="mutagenesis site" description="1.3-fold decrease of the catalytic efficiency for Ser-N-terminal peptide, but same affinity compared to the wild-type. 6.5-fold decrease of the catalytic efficiency for Met-N-terminal peptide, but same affinity compared to the wild-type." evidence="4">
    <original>Y</original>
    <variation>A</variation>
    <location>
        <position position="154"/>
    </location>
</feature>
<feature type="mutagenesis site" description="Almost same catalytic efficiency for Ser-N-terminal peptide and slight decrease of the affinity compared to the wild-type. 5-fold decrease of the catalytic efficiency for Met-N-terminal peptide and 1.5-fold decrease of the affinity compared to the wild-type." evidence="4">
    <original>Y</original>
    <variation>F</variation>
    <location>
        <position position="154"/>
    </location>
</feature>
<feature type="strand" evidence="16">
    <location>
        <begin position="13"/>
        <end position="16"/>
    </location>
</feature>
<feature type="helix" evidence="16">
    <location>
        <begin position="19"/>
        <end position="21"/>
    </location>
</feature>
<feature type="helix" evidence="16">
    <location>
        <begin position="22"/>
        <end position="32"/>
    </location>
</feature>
<feature type="helix" evidence="16">
    <location>
        <begin position="39"/>
        <end position="49"/>
    </location>
</feature>
<feature type="helix" evidence="16">
    <location>
        <begin position="50"/>
        <end position="52"/>
    </location>
</feature>
<feature type="strand" evidence="16">
    <location>
        <begin position="54"/>
        <end position="58"/>
    </location>
</feature>
<feature type="strand" evidence="16">
    <location>
        <begin position="61"/>
        <end position="74"/>
    </location>
</feature>
<feature type="strand" evidence="15">
    <location>
        <begin position="76"/>
        <end position="80"/>
    </location>
</feature>
<feature type="strand" evidence="16">
    <location>
        <begin position="83"/>
        <end position="94"/>
    </location>
</feature>
<feature type="helix" evidence="16">
    <location>
        <begin position="96"/>
        <end position="98"/>
    </location>
</feature>
<feature type="strand" evidence="16">
    <location>
        <begin position="100"/>
        <end position="102"/>
    </location>
</feature>
<feature type="helix" evidence="16">
    <location>
        <begin position="103"/>
        <end position="119"/>
    </location>
</feature>
<feature type="strand" evidence="16">
    <location>
        <begin position="122"/>
        <end position="129"/>
    </location>
</feature>
<feature type="helix" evidence="16">
    <location>
        <begin position="133"/>
        <end position="141"/>
    </location>
</feature>
<feature type="strand" evidence="16">
    <location>
        <begin position="145"/>
        <end position="150"/>
    </location>
</feature>
<feature type="strand" evidence="17">
    <location>
        <begin position="154"/>
        <end position="157"/>
    </location>
</feature>
<feature type="strand" evidence="16">
    <location>
        <begin position="160"/>
        <end position="166"/>
    </location>
</feature>
<reference key="1">
    <citation type="journal article" date="2001" name="Proc. Natl. Acad. Sci. U.S.A.">
        <title>The complete genome of the crenarchaeon Sulfolobus solfataricus P2.</title>
        <authorList>
            <person name="She Q."/>
            <person name="Singh R.K."/>
            <person name="Confalonieri F."/>
            <person name="Zivanovic Y."/>
            <person name="Allard G."/>
            <person name="Awayez M.J."/>
            <person name="Chan-Weiher C.C.-Y."/>
            <person name="Clausen I.G."/>
            <person name="Curtis B.A."/>
            <person name="De Moors A."/>
            <person name="Erauso G."/>
            <person name="Fletcher C."/>
            <person name="Gordon P.M.K."/>
            <person name="Heikamp-de Jong I."/>
            <person name="Jeffries A.C."/>
            <person name="Kozera C.J."/>
            <person name="Medina N."/>
            <person name="Peng X."/>
            <person name="Thi-Ngoc H.P."/>
            <person name="Redder P."/>
            <person name="Schenk M.E."/>
            <person name="Theriault C."/>
            <person name="Tolstrup N."/>
            <person name="Charlebois R.L."/>
            <person name="Doolittle W.F."/>
            <person name="Duguet M."/>
            <person name="Gaasterland T."/>
            <person name="Garrett R.A."/>
            <person name="Ragan M.A."/>
            <person name="Sensen C.W."/>
            <person name="Van der Oost J."/>
        </authorList>
    </citation>
    <scope>NUCLEOTIDE SEQUENCE [LARGE SCALE GENOMIC DNA]</scope>
    <source>
        <strain>ATCC 35092 / DSM 1617 / JCM 11322 / P2</strain>
    </source>
</reference>
<reference key="2">
    <citation type="journal article" date="2007" name="Mol. Microbiol.">
        <title>An acetylase with relaxed specificity catalyses protein N-terminal acetylation in Sulfolobus solfataricus.</title>
        <authorList>
            <person name="Mackay D.T."/>
            <person name="Botting C.H."/>
            <person name="Taylor G.L."/>
            <person name="White M.F."/>
        </authorList>
    </citation>
    <scope>FUNCTION</scope>
    <scope>CATALYTIC ACTIVITY</scope>
    <scope>SUBSTRATE SPECIFICITY</scope>
</reference>
<reference key="3">
    <citation type="journal article" date="2010" name="J. Struct. Funct. Genomics">
        <title>The Scottish Structural Proteomics Facility: targets, methods and outputs.</title>
        <authorList>
            <person name="Oke M."/>
            <person name="Carter L.G."/>
            <person name="Johnson K.A."/>
            <person name="Liu H."/>
            <person name="McMahon S.A."/>
            <person name="Yan X."/>
            <person name="Kerou M."/>
            <person name="Weikart N.D."/>
            <person name="Kadi N."/>
            <person name="Sheikh M.A."/>
            <person name="Schmelz S."/>
            <person name="Dorward M."/>
            <person name="Zawadzki M."/>
            <person name="Cozens C."/>
            <person name="Falconer H."/>
            <person name="Powers H."/>
            <person name="Overton I.M."/>
            <person name="van Niekerk C.A."/>
            <person name="Peng X."/>
            <person name="Patel P."/>
            <person name="Garrett R.A."/>
            <person name="Prangishvili D."/>
            <person name="Botting C.H."/>
            <person name="Coote P.J."/>
            <person name="Dryden D.T."/>
            <person name="Barton G.J."/>
            <person name="Schwarz-Linek U."/>
            <person name="Challis G.L."/>
            <person name="Taylor G.L."/>
            <person name="White M.F."/>
            <person name="Naismith J.H."/>
        </authorList>
    </citation>
    <scope>X-RAY CRYSTALLOGRAPHY (1.95 ANGSTROMS) IN COMPLEX WITH SUBSTRATE ANALOG</scope>
    <source>
        <strain>ATCC 35092 / DSM 1617 / JCM 11322 / P2</strain>
    </source>
</reference>
<reference key="4">
    <citation type="journal article" date="2013" name="Proc. Natl. Acad. Sci. U.S.A.">
        <title>Implications for the evolution of eukaryotic amino-terminal acetyltransferase (NAT) enzymes from the structure of an archaeal ortholog.</title>
        <authorList>
            <person name="Liszczak G."/>
            <person name="Marmorstein R."/>
        </authorList>
    </citation>
    <scope>X-RAY CRYSTALLOGRAPHY (1.98 ANGSTROMS) IN COMPLEX WITH ZINC ION AND ACETYL-COA</scope>
    <scope>FUNCTION</scope>
    <scope>CATALYTIC ACTIVITY</scope>
    <scope>BIOPHYSICOCHEMICAL PROPERTIES</scope>
    <scope>MUTAGENESIS OF LEU-33; PRO-34; GLU-35; TYR-37; HIS-88; TYR-125; GLU-127; ARG-129 AND TYR-154</scope>
    <scope>SUBSTRATE SPECIFICITY</scope>
</reference>
<reference key="5">
    <citation type="journal article" date="2015" name="Sci. Rep.">
        <title>Structural basis for substrate-specific acetylation of Nalpha-acetyltransferase Ard1 from Sulfolobus solfataricus.</title>
        <authorList>
            <person name="Chang Y.Y."/>
            <person name="Hsu C.H."/>
        </authorList>
    </citation>
    <scope>X-RAY CRYSTALLOGRAPHY (1.84 ANGSTROMS) IN COMPLEX WITH SUBSTRATE ANALOGS</scope>
    <scope>FUNCTION</scope>
    <scope>CATALYTIC ACTIVITY</scope>
    <scope>BIOPHYSICOCHEMICAL PROPERTIES</scope>
    <scope>MUTAGENESIS OF GLU-35; ARG-100; THR-105 AND ASN-132</scope>
    <scope>SUBSTRATE SPECIFICITY</scope>
</reference>
<reference key="6">
    <citation type="journal article" date="2016" name="ChemBioChem">
        <title>Multiple conformations of the loop region confers heat-resistance on ssArd1, a Thermophilic NatA.</title>
        <authorList>
            <person name="Chang Y.Y."/>
            <person name="Hsu C.H."/>
        </authorList>
    </citation>
    <scope>X-RAY CRYSTALLOGRAPHY (2.49 ANGSTROMS) IN COMPLEX WITH SUBSTRATE ANALOG</scope>
    <scope>MUTAGENESIS OF SER-75 AND SER-82</scope>
    <scope>BIOPHYSICOCHEMICAL PROPERTIES</scope>
    <scope>SUBUNIT</scope>
</reference>
<organism>
    <name type="scientific">Saccharolobus solfataricus (strain ATCC 35092 / DSM 1617 / JCM 11322 / P2)</name>
    <name type="common">Sulfolobus solfataricus</name>
    <dbReference type="NCBI Taxonomy" id="273057"/>
    <lineage>
        <taxon>Archaea</taxon>
        <taxon>Thermoproteota</taxon>
        <taxon>Thermoprotei</taxon>
        <taxon>Sulfolobales</taxon>
        <taxon>Sulfolobaceae</taxon>
        <taxon>Saccharolobus</taxon>
    </lineage>
</organism>
<evidence type="ECO:0000255" key="1">
    <source>
        <dbReference type="PROSITE-ProRule" id="PRU00532"/>
    </source>
</evidence>
<evidence type="ECO:0000269" key="2">
    <source>
    </source>
</evidence>
<evidence type="ECO:0000269" key="3">
    <source>
    </source>
</evidence>
<evidence type="ECO:0000269" key="4">
    <source>
    </source>
</evidence>
<evidence type="ECO:0000269" key="5">
    <source>
    </source>
</evidence>
<evidence type="ECO:0000269" key="6">
    <source>
    </source>
</evidence>
<evidence type="ECO:0000303" key="7">
    <source>
    </source>
</evidence>
<evidence type="ECO:0000305" key="8"/>
<evidence type="ECO:0000305" key="9">
    <source>
    </source>
</evidence>
<evidence type="ECO:0007744" key="10">
    <source>
        <dbReference type="PDB" id="2X7B"/>
    </source>
</evidence>
<evidence type="ECO:0007744" key="11">
    <source>
        <dbReference type="PDB" id="4LX9"/>
    </source>
</evidence>
<evidence type="ECO:0007744" key="12">
    <source>
        <dbReference type="PDB" id="4R3K"/>
    </source>
</evidence>
<evidence type="ECO:0007744" key="13">
    <source>
        <dbReference type="PDB" id="4R3L"/>
    </source>
</evidence>
<evidence type="ECO:0007744" key="14">
    <source>
        <dbReference type="PDB" id="5C88"/>
    </source>
</evidence>
<evidence type="ECO:0007829" key="15">
    <source>
        <dbReference type="PDB" id="4R3K"/>
    </source>
</evidence>
<evidence type="ECO:0007829" key="16">
    <source>
        <dbReference type="PDB" id="4R3L"/>
    </source>
</evidence>
<evidence type="ECO:0007829" key="17">
    <source>
        <dbReference type="PDB" id="5C88"/>
    </source>
</evidence>
<keyword id="KW-0002">3D-structure</keyword>
<keyword id="KW-0012">Acyltransferase</keyword>
<keyword id="KW-0963">Cytoplasm</keyword>
<keyword id="KW-0479">Metal-binding</keyword>
<keyword id="KW-1185">Reference proteome</keyword>
<keyword id="KW-0808">Transferase</keyword>
<keyword id="KW-0862">Zinc</keyword>
<protein>
    <recommendedName>
        <fullName evidence="7">N-alpha-acetyltransferase</fullName>
        <shortName evidence="7">NAT</shortName>
        <ecNumber evidence="2 4 5">2.3.1.255</ecNumber>
        <ecNumber evidence="2 4">2.3.1.258</ecNumber>
    </recommendedName>
    <alternativeName>
        <fullName evidence="7">Amino-terminal acetyltransferase</fullName>
    </alternativeName>
    <alternativeName>
        <fullName evidence="7">N-terminal acetyltransferase</fullName>
    </alternativeName>
</protein>
<proteinExistence type="evidence at protein level"/>
<accession>Q980R9</accession>
<sequence length="167" mass="19448">MELAEKDKGRDFTLRNARMDDIDQIIKINRLTLPENYPYYFFVEHLKEYGLAFFVAIVDNSVVGYIMPRIEWGFSNIKQLPSLVRKGHVVSIAVLEEYRRKGIATTLLEASMKSMKNDYNAEEIYLEVRVSNYPAIALYEKLNFKKVKVLKGYYADGEDAYLMARPL</sequence>